<organism>
    <name type="scientific">Candida albicans (strain SC5314 / ATCC MYA-2876)</name>
    <name type="common">Yeast</name>
    <dbReference type="NCBI Taxonomy" id="237561"/>
    <lineage>
        <taxon>Eukaryota</taxon>
        <taxon>Fungi</taxon>
        <taxon>Dikarya</taxon>
        <taxon>Ascomycota</taxon>
        <taxon>Saccharomycotina</taxon>
        <taxon>Pichiomycetes</taxon>
        <taxon>Debaryomycetaceae</taxon>
        <taxon>Candida/Lodderomyces clade</taxon>
        <taxon>Candida</taxon>
    </lineage>
</organism>
<accession>Q5AK64</accession>
<accession>A0A1D8PP11</accession>
<accession>Q5AKM7</accession>
<keyword id="KW-0067">ATP-binding</keyword>
<keyword id="KW-0436">Ligase</keyword>
<keyword id="KW-0496">Mitochondrion</keyword>
<keyword id="KW-0547">Nucleotide-binding</keyword>
<keyword id="KW-0648">Protein biosynthesis</keyword>
<keyword id="KW-1185">Reference proteome</keyword>
<comment type="function">
    <text evidence="1">Allows the formation of correctly charged Gln-tRNA(Gln) through the transamidation of misacylated Glu-tRNA(Gln) in the mitochondria. The reaction takes place in the presence of glutamine and ATP through an activated gamma-phospho-Glu-tRNA(Gln).</text>
</comment>
<comment type="catalytic activity">
    <reaction evidence="1">
        <text>L-glutamyl-tRNA(Gln) + L-glutamine + ATP + H2O = L-glutaminyl-tRNA(Gln) + L-glutamate + ADP + phosphate + H(+)</text>
        <dbReference type="Rhea" id="RHEA:17521"/>
        <dbReference type="Rhea" id="RHEA-COMP:9681"/>
        <dbReference type="Rhea" id="RHEA-COMP:9684"/>
        <dbReference type="ChEBI" id="CHEBI:15377"/>
        <dbReference type="ChEBI" id="CHEBI:15378"/>
        <dbReference type="ChEBI" id="CHEBI:29985"/>
        <dbReference type="ChEBI" id="CHEBI:30616"/>
        <dbReference type="ChEBI" id="CHEBI:43474"/>
        <dbReference type="ChEBI" id="CHEBI:58359"/>
        <dbReference type="ChEBI" id="CHEBI:78520"/>
        <dbReference type="ChEBI" id="CHEBI:78521"/>
        <dbReference type="ChEBI" id="CHEBI:456216"/>
        <dbReference type="EC" id="6.3.5.7"/>
    </reaction>
</comment>
<comment type="subunit">
    <text evidence="1">Subunit of the heterotrimeric GatFAB amidotransferase (AdT) complex, composed of A, B and F subunits.</text>
</comment>
<comment type="subcellular location">
    <subcellularLocation>
        <location evidence="1">Mitochondrion</location>
    </subcellularLocation>
</comment>
<comment type="similarity">
    <text evidence="1">Belongs to the amidase family. GatA subfamily.</text>
</comment>
<evidence type="ECO:0000255" key="1">
    <source>
        <dbReference type="HAMAP-Rule" id="MF_03150"/>
    </source>
</evidence>
<feature type="chain" id="PRO_0000413349" description="Glutamyl-tRNA(Gln) amidotransferase subunit A, mitochondrial">
    <location>
        <begin position="1"/>
        <end position="450"/>
    </location>
</feature>
<feature type="active site" description="Charge relay system" evidence="1">
    <location>
        <position position="47"/>
    </location>
</feature>
<feature type="active site" description="Charge relay system" evidence="1">
    <location>
        <position position="122"/>
    </location>
</feature>
<feature type="active site" description="Acyl-ester intermediate" evidence="1">
    <location>
        <position position="146"/>
    </location>
</feature>
<sequence length="450" mass="49026">MRKTLTSIRFLSDGIRVKDKWNSLISDLVVEPTNSTGPLSGTTYIVKDNIATSHGYTTAASKILSNYESPFNATIIDLLSSNGSKLIGKSNLDEFGMGSANYNSYFNKVTNPYDNTKVPGGSSGGSAASVAGKMCSFSIGTDTGGSVRLPASYCNVFGFKPTYGRISRWGVIPYAQTLDTVGIIGENVNIIKRVYDVLNKYDDKDPTCLPEEVRQKIPTTKKETLTIGVPHEFVLKELSADVRESWEYALSKTCKLGHLVKPISIKTIKKALPSYYTLATAEAASNLSRYDGIRYGYNTNELVNSPIELIATNRSDGFGSEVQRRILLGNYTLSSDSGDHYLRATQIREELCAEFSSIFNNSHVLLQDEQSSDKVDLIMAPTSTSTAPTWDEFVSANEKNFLNSYVNDVLTVPASLAGIPAISVPVNGIGIQLMGQFGDDDLVLQLADQI</sequence>
<protein>
    <recommendedName>
        <fullName evidence="1">Glutamyl-tRNA(Gln) amidotransferase subunit A, mitochondrial</fullName>
        <shortName evidence="1">Glu-AdT subunit A</shortName>
        <ecNumber evidence="1">6.3.5.7</ecNumber>
    </recommendedName>
</protein>
<gene>
    <name evidence="1" type="primary">HER2</name>
    <name type="ordered locus">CAALFM_C504710WA</name>
    <name type="ORF">CaO19.11438</name>
    <name type="ORF">CaO19.3956</name>
</gene>
<name>GATA_CANAL</name>
<proteinExistence type="inferred from homology"/>
<reference key="1">
    <citation type="journal article" date="2004" name="Proc. Natl. Acad. Sci. U.S.A.">
        <title>The diploid genome sequence of Candida albicans.</title>
        <authorList>
            <person name="Jones T."/>
            <person name="Federspiel N.A."/>
            <person name="Chibana H."/>
            <person name="Dungan J."/>
            <person name="Kalman S."/>
            <person name="Magee B.B."/>
            <person name="Newport G."/>
            <person name="Thorstenson Y.R."/>
            <person name="Agabian N."/>
            <person name="Magee P.T."/>
            <person name="Davis R.W."/>
            <person name="Scherer S."/>
        </authorList>
    </citation>
    <scope>NUCLEOTIDE SEQUENCE [LARGE SCALE GENOMIC DNA]</scope>
    <source>
        <strain>SC5314 / ATCC MYA-2876</strain>
    </source>
</reference>
<reference key="2">
    <citation type="journal article" date="2007" name="Genome Biol.">
        <title>Assembly of the Candida albicans genome into sixteen supercontigs aligned on the eight chromosomes.</title>
        <authorList>
            <person name="van het Hoog M."/>
            <person name="Rast T.J."/>
            <person name="Martchenko M."/>
            <person name="Grindle S."/>
            <person name="Dignard D."/>
            <person name="Hogues H."/>
            <person name="Cuomo C."/>
            <person name="Berriman M."/>
            <person name="Scherer S."/>
            <person name="Magee B.B."/>
            <person name="Whiteway M."/>
            <person name="Chibana H."/>
            <person name="Nantel A."/>
            <person name="Magee P.T."/>
        </authorList>
    </citation>
    <scope>GENOME REANNOTATION</scope>
    <source>
        <strain>SC5314 / ATCC MYA-2876</strain>
    </source>
</reference>
<reference key="3">
    <citation type="journal article" date="2013" name="Genome Biol.">
        <title>Assembly of a phased diploid Candida albicans genome facilitates allele-specific measurements and provides a simple model for repeat and indel structure.</title>
        <authorList>
            <person name="Muzzey D."/>
            <person name="Schwartz K."/>
            <person name="Weissman J.S."/>
            <person name="Sherlock G."/>
        </authorList>
    </citation>
    <scope>NUCLEOTIDE SEQUENCE [LARGE SCALE GENOMIC DNA]</scope>
    <scope>GENOME REANNOTATION</scope>
    <source>
        <strain>SC5314 / ATCC MYA-2876</strain>
    </source>
</reference>
<dbReference type="EC" id="6.3.5.7" evidence="1"/>
<dbReference type="EMBL" id="CP017627">
    <property type="protein sequence ID" value="AOW29877.1"/>
    <property type="molecule type" value="Genomic_DNA"/>
</dbReference>
<dbReference type="RefSeq" id="XP_721865.2">
    <property type="nucleotide sequence ID" value="XM_716772.2"/>
</dbReference>
<dbReference type="SMR" id="Q5AK64"/>
<dbReference type="FunCoup" id="Q5AK64">
    <property type="interactions" value="363"/>
</dbReference>
<dbReference type="STRING" id="237561.Q5AK64"/>
<dbReference type="EnsemblFungi" id="C5_04710W_A-T">
    <property type="protein sequence ID" value="C5_04710W_A-T-p1"/>
    <property type="gene ID" value="C5_04710W_A"/>
</dbReference>
<dbReference type="GeneID" id="3636517"/>
<dbReference type="KEGG" id="cal:CAALFM_C504710WA"/>
<dbReference type="CGD" id="CAL0000174814">
    <property type="gene designation" value="orf19.11438"/>
</dbReference>
<dbReference type="VEuPathDB" id="FungiDB:C5_04710W_A"/>
<dbReference type="eggNOG" id="KOG1211">
    <property type="taxonomic scope" value="Eukaryota"/>
</dbReference>
<dbReference type="HOGENOM" id="CLU_009600_0_3_1"/>
<dbReference type="InParanoid" id="Q5AK64"/>
<dbReference type="OrthoDB" id="421993at2759"/>
<dbReference type="PRO" id="PR:Q5AK64"/>
<dbReference type="Proteomes" id="UP000000559">
    <property type="component" value="Chromosome 5"/>
</dbReference>
<dbReference type="GO" id="GO:0030956">
    <property type="term" value="C:glutamyl-tRNA(Gln) amidotransferase complex"/>
    <property type="evidence" value="ECO:0000318"/>
    <property type="project" value="GO_Central"/>
</dbReference>
<dbReference type="GO" id="GO:0005739">
    <property type="term" value="C:mitochondrion"/>
    <property type="evidence" value="ECO:0000318"/>
    <property type="project" value="GO_Central"/>
</dbReference>
<dbReference type="GO" id="GO:0005524">
    <property type="term" value="F:ATP binding"/>
    <property type="evidence" value="ECO:0007669"/>
    <property type="project" value="UniProtKB-KW"/>
</dbReference>
<dbReference type="GO" id="GO:0050567">
    <property type="term" value="F:glutaminyl-tRNA synthase (glutamine-hydrolyzing) activity"/>
    <property type="evidence" value="ECO:0000318"/>
    <property type="project" value="GO_Central"/>
</dbReference>
<dbReference type="GO" id="GO:0007029">
    <property type="term" value="P:endoplasmic reticulum organization"/>
    <property type="evidence" value="ECO:0007669"/>
    <property type="project" value="EnsemblFungi"/>
</dbReference>
<dbReference type="GO" id="GO:0070681">
    <property type="term" value="P:glutaminyl-tRNAGln biosynthesis via transamidation"/>
    <property type="evidence" value="ECO:0000318"/>
    <property type="project" value="GO_Central"/>
</dbReference>
<dbReference type="GO" id="GO:0032543">
    <property type="term" value="P:mitochondrial translation"/>
    <property type="evidence" value="ECO:0000318"/>
    <property type="project" value="GO_Central"/>
</dbReference>
<dbReference type="Gene3D" id="3.90.1300.10">
    <property type="entry name" value="Amidase signature (AS) domain"/>
    <property type="match status" value="1"/>
</dbReference>
<dbReference type="HAMAP" id="MF_00120">
    <property type="entry name" value="GatA"/>
    <property type="match status" value="1"/>
</dbReference>
<dbReference type="InterPro" id="IPR000120">
    <property type="entry name" value="Amidase"/>
</dbReference>
<dbReference type="InterPro" id="IPR020556">
    <property type="entry name" value="Amidase_CS"/>
</dbReference>
<dbReference type="InterPro" id="IPR023631">
    <property type="entry name" value="Amidase_dom"/>
</dbReference>
<dbReference type="InterPro" id="IPR036928">
    <property type="entry name" value="AS_sf"/>
</dbReference>
<dbReference type="InterPro" id="IPR004412">
    <property type="entry name" value="GatA"/>
</dbReference>
<dbReference type="PANTHER" id="PTHR11895:SF7">
    <property type="entry name" value="GLUTAMYL-TRNA(GLN) AMIDOTRANSFERASE SUBUNIT A, MITOCHONDRIAL"/>
    <property type="match status" value="1"/>
</dbReference>
<dbReference type="PANTHER" id="PTHR11895">
    <property type="entry name" value="TRANSAMIDASE"/>
    <property type="match status" value="1"/>
</dbReference>
<dbReference type="Pfam" id="PF01425">
    <property type="entry name" value="Amidase"/>
    <property type="match status" value="1"/>
</dbReference>
<dbReference type="SUPFAM" id="SSF75304">
    <property type="entry name" value="Amidase signature (AS) enzymes"/>
    <property type="match status" value="1"/>
</dbReference>
<dbReference type="PROSITE" id="PS00571">
    <property type="entry name" value="AMIDASES"/>
    <property type="match status" value="1"/>
</dbReference>